<reference key="1">
    <citation type="journal article" date="2005" name="Science">
        <title>The transcriptional landscape of the mammalian genome.</title>
        <authorList>
            <person name="Carninci P."/>
            <person name="Kasukawa T."/>
            <person name="Katayama S."/>
            <person name="Gough J."/>
            <person name="Frith M.C."/>
            <person name="Maeda N."/>
            <person name="Oyama R."/>
            <person name="Ravasi T."/>
            <person name="Lenhard B."/>
            <person name="Wells C."/>
            <person name="Kodzius R."/>
            <person name="Shimokawa K."/>
            <person name="Bajic V.B."/>
            <person name="Brenner S.E."/>
            <person name="Batalov S."/>
            <person name="Forrest A.R."/>
            <person name="Zavolan M."/>
            <person name="Davis M.J."/>
            <person name="Wilming L.G."/>
            <person name="Aidinis V."/>
            <person name="Allen J.E."/>
            <person name="Ambesi-Impiombato A."/>
            <person name="Apweiler R."/>
            <person name="Aturaliya R.N."/>
            <person name="Bailey T.L."/>
            <person name="Bansal M."/>
            <person name="Baxter L."/>
            <person name="Beisel K.W."/>
            <person name="Bersano T."/>
            <person name="Bono H."/>
            <person name="Chalk A.M."/>
            <person name="Chiu K.P."/>
            <person name="Choudhary V."/>
            <person name="Christoffels A."/>
            <person name="Clutterbuck D.R."/>
            <person name="Crowe M.L."/>
            <person name="Dalla E."/>
            <person name="Dalrymple B.P."/>
            <person name="de Bono B."/>
            <person name="Della Gatta G."/>
            <person name="di Bernardo D."/>
            <person name="Down T."/>
            <person name="Engstrom P."/>
            <person name="Fagiolini M."/>
            <person name="Faulkner G."/>
            <person name="Fletcher C.F."/>
            <person name="Fukushima T."/>
            <person name="Furuno M."/>
            <person name="Futaki S."/>
            <person name="Gariboldi M."/>
            <person name="Georgii-Hemming P."/>
            <person name="Gingeras T.R."/>
            <person name="Gojobori T."/>
            <person name="Green R.E."/>
            <person name="Gustincich S."/>
            <person name="Harbers M."/>
            <person name="Hayashi Y."/>
            <person name="Hensch T.K."/>
            <person name="Hirokawa N."/>
            <person name="Hill D."/>
            <person name="Huminiecki L."/>
            <person name="Iacono M."/>
            <person name="Ikeo K."/>
            <person name="Iwama A."/>
            <person name="Ishikawa T."/>
            <person name="Jakt M."/>
            <person name="Kanapin A."/>
            <person name="Katoh M."/>
            <person name="Kawasawa Y."/>
            <person name="Kelso J."/>
            <person name="Kitamura H."/>
            <person name="Kitano H."/>
            <person name="Kollias G."/>
            <person name="Krishnan S.P."/>
            <person name="Kruger A."/>
            <person name="Kummerfeld S.K."/>
            <person name="Kurochkin I.V."/>
            <person name="Lareau L.F."/>
            <person name="Lazarevic D."/>
            <person name="Lipovich L."/>
            <person name="Liu J."/>
            <person name="Liuni S."/>
            <person name="McWilliam S."/>
            <person name="Madan Babu M."/>
            <person name="Madera M."/>
            <person name="Marchionni L."/>
            <person name="Matsuda H."/>
            <person name="Matsuzawa S."/>
            <person name="Miki H."/>
            <person name="Mignone F."/>
            <person name="Miyake S."/>
            <person name="Morris K."/>
            <person name="Mottagui-Tabar S."/>
            <person name="Mulder N."/>
            <person name="Nakano N."/>
            <person name="Nakauchi H."/>
            <person name="Ng P."/>
            <person name="Nilsson R."/>
            <person name="Nishiguchi S."/>
            <person name="Nishikawa S."/>
            <person name="Nori F."/>
            <person name="Ohara O."/>
            <person name="Okazaki Y."/>
            <person name="Orlando V."/>
            <person name="Pang K.C."/>
            <person name="Pavan W.J."/>
            <person name="Pavesi G."/>
            <person name="Pesole G."/>
            <person name="Petrovsky N."/>
            <person name="Piazza S."/>
            <person name="Reed J."/>
            <person name="Reid J.F."/>
            <person name="Ring B.Z."/>
            <person name="Ringwald M."/>
            <person name="Rost B."/>
            <person name="Ruan Y."/>
            <person name="Salzberg S.L."/>
            <person name="Sandelin A."/>
            <person name="Schneider C."/>
            <person name="Schoenbach C."/>
            <person name="Sekiguchi K."/>
            <person name="Semple C.A."/>
            <person name="Seno S."/>
            <person name="Sessa L."/>
            <person name="Sheng Y."/>
            <person name="Shibata Y."/>
            <person name="Shimada H."/>
            <person name="Shimada K."/>
            <person name="Silva D."/>
            <person name="Sinclair B."/>
            <person name="Sperling S."/>
            <person name="Stupka E."/>
            <person name="Sugiura K."/>
            <person name="Sultana R."/>
            <person name="Takenaka Y."/>
            <person name="Taki K."/>
            <person name="Tammoja K."/>
            <person name="Tan S.L."/>
            <person name="Tang S."/>
            <person name="Taylor M.S."/>
            <person name="Tegner J."/>
            <person name="Teichmann S.A."/>
            <person name="Ueda H.R."/>
            <person name="van Nimwegen E."/>
            <person name="Verardo R."/>
            <person name="Wei C.L."/>
            <person name="Yagi K."/>
            <person name="Yamanishi H."/>
            <person name="Zabarovsky E."/>
            <person name="Zhu S."/>
            <person name="Zimmer A."/>
            <person name="Hide W."/>
            <person name="Bult C."/>
            <person name="Grimmond S.M."/>
            <person name="Teasdale R.D."/>
            <person name="Liu E.T."/>
            <person name="Brusic V."/>
            <person name="Quackenbush J."/>
            <person name="Wahlestedt C."/>
            <person name="Mattick J.S."/>
            <person name="Hume D.A."/>
            <person name="Kai C."/>
            <person name="Sasaki D."/>
            <person name="Tomaru Y."/>
            <person name="Fukuda S."/>
            <person name="Kanamori-Katayama M."/>
            <person name="Suzuki M."/>
            <person name="Aoki J."/>
            <person name="Arakawa T."/>
            <person name="Iida J."/>
            <person name="Imamura K."/>
            <person name="Itoh M."/>
            <person name="Kato T."/>
            <person name="Kawaji H."/>
            <person name="Kawagashira N."/>
            <person name="Kawashima T."/>
            <person name="Kojima M."/>
            <person name="Kondo S."/>
            <person name="Konno H."/>
            <person name="Nakano K."/>
            <person name="Ninomiya N."/>
            <person name="Nishio T."/>
            <person name="Okada M."/>
            <person name="Plessy C."/>
            <person name="Shibata K."/>
            <person name="Shiraki T."/>
            <person name="Suzuki S."/>
            <person name="Tagami M."/>
            <person name="Waki K."/>
            <person name="Watahiki A."/>
            <person name="Okamura-Oho Y."/>
            <person name="Suzuki H."/>
            <person name="Kawai J."/>
            <person name="Hayashizaki Y."/>
        </authorList>
    </citation>
    <scope>NUCLEOTIDE SEQUENCE [LARGE SCALE MRNA]</scope>
    <source>
        <strain>C57BL/6J</strain>
        <tissue>Eye</tissue>
    </source>
</reference>
<reference key="2">
    <citation type="journal article" date="2009" name="PLoS Biol.">
        <title>Lineage-specific biology revealed by a finished genome assembly of the mouse.</title>
        <authorList>
            <person name="Church D.M."/>
            <person name="Goodstadt L."/>
            <person name="Hillier L.W."/>
            <person name="Zody M.C."/>
            <person name="Goldstein S."/>
            <person name="She X."/>
            <person name="Bult C.J."/>
            <person name="Agarwala R."/>
            <person name="Cherry J.L."/>
            <person name="DiCuccio M."/>
            <person name="Hlavina W."/>
            <person name="Kapustin Y."/>
            <person name="Meric P."/>
            <person name="Maglott D."/>
            <person name="Birtle Z."/>
            <person name="Marques A.C."/>
            <person name="Graves T."/>
            <person name="Zhou S."/>
            <person name="Teague B."/>
            <person name="Potamousis K."/>
            <person name="Churas C."/>
            <person name="Place M."/>
            <person name="Herschleb J."/>
            <person name="Runnheim R."/>
            <person name="Forrest D."/>
            <person name="Amos-Landgraf J."/>
            <person name="Schwartz D.C."/>
            <person name="Cheng Z."/>
            <person name="Lindblad-Toh K."/>
            <person name="Eichler E.E."/>
            <person name="Ponting C.P."/>
        </authorList>
    </citation>
    <scope>NUCLEOTIDE SEQUENCE [LARGE SCALE GENOMIC DNA]</scope>
    <source>
        <strain>C57BL/6J</strain>
    </source>
</reference>
<reference key="3">
    <citation type="journal article" date="2004" name="Genome Res.">
        <title>The status, quality, and expansion of the NIH full-length cDNA project: the Mammalian Gene Collection (MGC).</title>
        <authorList>
            <consortium name="The MGC Project Team"/>
        </authorList>
    </citation>
    <scope>NUCLEOTIDE SEQUENCE [LARGE SCALE MRNA]</scope>
    <source>
        <strain>C57BL/6J</strain>
        <strain>Czech II</strain>
        <tissue>Brain</tissue>
        <tissue>Mammary tumor</tissue>
    </source>
</reference>
<reference key="4">
    <citation type="journal article" date="2011" name="Stem Cells">
        <title>PRC2 complexes with JARID2, MTF2, and esPRC2p48 in ES cells to modulate ES cell pluripotency and somatic cell reprogramming.</title>
        <authorList>
            <person name="Zhang Z."/>
            <person name="Jones A."/>
            <person name="Sun C.W."/>
            <person name="Li C."/>
            <person name="Chang C.W."/>
            <person name="Joo H.Y."/>
            <person name="Dai Q."/>
            <person name="Mysliwiec M.R."/>
            <person name="Wu L.C."/>
            <person name="Guo Y."/>
            <person name="Yang W."/>
            <person name="Liu K."/>
            <person name="Pawlik K.M."/>
            <person name="Erdjument-Bromage H."/>
            <person name="Tempst P."/>
            <person name="Lee Y."/>
            <person name="Min J."/>
            <person name="Townes T.M."/>
            <person name="Wang H."/>
        </authorList>
    </citation>
    <scope>INTERACTION WITH THE PRC2/EZH2 COMPLEX</scope>
    <scope>DEVELOPMENTAL STAGE</scope>
</reference>
<reference key="5">
    <citation type="journal article" date="2013" name="Nucleic Acids Res.">
        <title>Reverse engineering a mouse embryonic stem cell-specific transcriptional network reveals a new modulator of neuronal differentiation.</title>
        <authorList>
            <person name="De Cegli R."/>
            <person name="Iacobacci S."/>
            <person name="Flore G."/>
            <person name="Gambardella G."/>
            <person name="Mao L."/>
            <person name="Cutillo L."/>
            <person name="Lauria M."/>
            <person name="Klose J."/>
            <person name="Illingworth E."/>
            <person name="Banfi S."/>
            <person name="di Bernardo D."/>
        </authorList>
    </citation>
    <scope>TISSUE SPECIFICITY</scope>
    <scope>DEVELOPMENTAL STAGE</scope>
    <scope>FUNCTION</scope>
</reference>
<reference key="6">
    <citation type="journal article" date="2015" name="Cell Discov.">
        <title>The PRC2-associated factor C17orf96 is a novel CpG island regulator in mouse ES cells.</title>
        <authorList>
            <person name="Liefke R."/>
            <person name="Shi Y."/>
        </authorList>
    </citation>
    <scope>INTERACTION WITH THE PRC2/EED-EZH2 COMPLEX</scope>
    <scope>TISSUE SPECIFICITY</scope>
    <scope>DEVELOPMENTAL STAGE</scope>
</reference>
<reference key="7">
    <citation type="journal article" date="2016" name="Mol. Cell">
        <title>EPOP functionally links elongin and Polycomb in pluripotent stem cells.</title>
        <authorList>
            <person name="Beringer M."/>
            <person name="Pisano P."/>
            <person name="Di Carlo V."/>
            <person name="Blanco E."/>
            <person name="Chammas P."/>
            <person name="Vizan P."/>
            <person name="Gutierrez A."/>
            <person name="Aranda S."/>
            <person name="Payer B."/>
            <person name="Wierer M."/>
            <person name="Di Croce L."/>
        </authorList>
    </citation>
    <scope>FUNCTION</scope>
    <scope>SUBCELLULAR LOCATION</scope>
    <scope>DEVELOPMENTAL STAGE</scope>
    <scope>INTERACTION WITH THE PRC2/EZH2 COMPLEX</scope>
    <scope>INTERACTION WITH THE ELONGIN BC COMPLEX</scope>
    <scope>MUTAGENESIS OF LEU-40</scope>
</reference>
<reference key="8">
    <citation type="journal article" date="2016" name="Mol. Cell">
        <title>EPOP interacts with elongin BC and USP7 to modulate the chromatin landscape.</title>
        <authorList>
            <person name="Liefke R."/>
            <person name="Karwacki-Neisius V."/>
            <person name="Shi Y."/>
        </authorList>
    </citation>
    <scope>FUNCTION</scope>
    <scope>SUBCELLULAR LOCATION</scope>
    <scope>TISSUE SPECIFICITY</scope>
    <scope>INTERACTION WITH THE PRC2/EZH2 COMPLEX</scope>
    <scope>INTERACTION WITH THE ELONGIN BC COMPLEX</scope>
    <scope>INTERACTION WITH USP7</scope>
    <scope>MUTAGENESIS OF LEU-40</scope>
</reference>
<reference key="9">
    <citation type="journal article" date="2017" name="Mol. Cell">
        <authorList>
            <person name="Liefke R."/>
            <person name="Karwacki-Neisius V."/>
            <person name="Shi Y."/>
        </authorList>
    </citation>
    <scope>ERRATUM OF PUBMED:27863226</scope>
</reference>
<sequence length="369" mass="38095">METLCPPPRLAVPASPRGSPCSPTPLKPRRGTPEFSPLCLRALAFCALAKPRPSSLGLGPGELAPRTPVLLGPPASPCTGGWAADGLKHLGGQAGRPSDVSSPAREDADVAVCPGGGEEEEGGGGFPHFGAGSCAPPGRCPAPLRPQDSPTNPAWSPPRPARGLDAASSPPLEPGSPPPSPPAGLSPEPAPSEQPVPASEAPGGGDPAPTAPEAPALSPSTADAAPDPPRDLRQEHFNRLIRRSKLWCYAKGFALDTPSLRRGPERPAAKARGAAKKRRRPAPPPPSVQPRRPVPTLPTSSTFSLLDCFPCPPALVVEENGDLGPASSLRLQGDAKPPPAHPLWKWQMGGPAVPEPPGLKSWWVNLEEL</sequence>
<evidence type="ECO:0000250" key="1">
    <source>
        <dbReference type="UniProtKB" id="A6NHQ4"/>
    </source>
</evidence>
<evidence type="ECO:0000256" key="2">
    <source>
        <dbReference type="SAM" id="MobiDB-lite"/>
    </source>
</evidence>
<evidence type="ECO:0000269" key="3">
    <source>
    </source>
</evidence>
<evidence type="ECO:0000269" key="4">
    <source>
    </source>
</evidence>
<evidence type="ECO:0000269" key="5">
    <source>
    </source>
</evidence>
<evidence type="ECO:0000269" key="6">
    <source>
    </source>
</evidence>
<evidence type="ECO:0000269" key="7">
    <source>
    </source>
</evidence>
<evidence type="ECO:0000303" key="8">
    <source>
    </source>
</evidence>
<evidence type="ECO:0000303" key="9">
    <source>
    </source>
</evidence>
<evidence type="ECO:0000303" key="10">
    <source>
    </source>
</evidence>
<evidence type="ECO:0000303" key="11">
    <source>
    </source>
</evidence>
<evidence type="ECO:0000305" key="12"/>
<evidence type="ECO:0000312" key="13">
    <source>
        <dbReference type="MGI" id="MGI:2143991"/>
    </source>
</evidence>
<comment type="function">
    <text evidence="4 6 7">Scaffold protein that serves as a bridging partner between the PRC2/EZH2 complex and the elongin BC complex: required to fine-tune the transcriptional status of Polycomb group (PcG) target genes in embryonic stem cells (ESCs) (PubMed:27863225, PubMed:27863226). Plays a key role in genomic regions that display both active and repressive chromatin properties in pluripotent stem cells by sustaining low level expression at PcG target genes: acts by recruiting the elongin BC complex, thereby restricting excessive activity of the PRC2/EZH2 complex (PubMed:27863225, PubMed:27863226). Interaction with USP7 promotes deubiquitination of H2B at promoter sites (PubMed:27863226). Acts as a regulator of neuronal differentiation (PubMed:23180766).</text>
</comment>
<comment type="subunit">
    <text evidence="1 3 5 6 7">Associates with the PRC2 complex, which consists of the core components EED, EZH1 or EZH2, SUZ12, and RBBP4, and various combinations of accessory subunits including AEBP2, JARID2, PHF19, MTF2 and EPOP (PubMed:21732481, PubMed:27462409, PubMed:27863225, PubMed:27863226). Within the complex, interacts with SUZ12 (via C2H2 zinc finger domain); competes with JARID2 for SUZ12 binding (By similarity). Associates with the elongin BC complex (PubMed:27863225, PubMed:27863226). Interacts with USP7 (PubMed:27863226).</text>
</comment>
<comment type="interaction">
    <interactant intactId="EBI-16024836">
        <id>Q7TNS8</id>
    </interactant>
    <interactant intactId="EBI-904301">
        <id>Q921E6</id>
        <label>Eed</label>
    </interactant>
    <organismsDiffer>false</organismsDiffer>
    <experiments>2</experiments>
</comment>
<comment type="interaction">
    <interactant intactId="EBI-16024836">
        <id>Q7TNS8</id>
    </interactant>
    <interactant intactId="EBI-309435">
        <id>Q9D902</id>
        <label>Gtf2e2</label>
    </interactant>
    <organismsDiffer>false</organismsDiffer>
    <experiments>2</experiments>
</comment>
<comment type="interaction">
    <interactant intactId="EBI-16024836">
        <id>Q7TNS8</id>
    </interactant>
    <interactant intactId="EBI-2526494">
        <id>Q80U70</id>
        <label>Suz12</label>
    </interactant>
    <organismsDiffer>false</organismsDiffer>
    <experiments>2</experiments>
</comment>
<comment type="subcellular location">
    <subcellularLocation>
        <location evidence="6">Nucleus</location>
    </subcellularLocation>
    <subcellularLocation>
        <location evidence="6 7">Chromosome</location>
    </subcellularLocation>
    <text evidence="7">Localizes at both PRC2/EZH2 sites (H3K27me3) and broad H3K4me3 sites on chromatin of embryonic stem cells (ESCs) (PubMed:27863226).</text>
</comment>
<comment type="tissue specificity">
    <text evidence="4">Highly expressed in embryonic stem cells (ESCs) during embryogenesis and in the adult brain (PubMed:23180766).</text>
</comment>
<comment type="developmental stage">
    <text evidence="3 4 5 6">Highly expressed in embryonic stem cells (ESCs) during embryogenesis: expression starts from 4-cell stage.</text>
</comment>
<comment type="domain">
    <text evidence="6 7">The BC-box, which mediates binding to the elongin BC complex.</text>
</comment>
<comment type="sequence caution" evidence="12">
    <conflict type="erroneous initiation">
        <sequence resource="EMBL-CDS" id="AAH06054"/>
    </conflict>
</comment>
<proteinExistence type="evidence at protein level"/>
<feature type="chain" id="PRO_0000332155" description="Elongin BC and Polycomb repressive complex 2-associated protein">
    <location>
        <begin position="1"/>
        <end position="369"/>
    </location>
</feature>
<feature type="region of interest" description="Disordered" evidence="2">
    <location>
        <begin position="1"/>
        <end position="33"/>
    </location>
</feature>
<feature type="region of interest" description="BC-box" evidence="6 7">
    <location>
        <begin position="39"/>
        <end position="48"/>
    </location>
</feature>
<feature type="region of interest" description="Disordered" evidence="2">
    <location>
        <begin position="89"/>
        <end position="237"/>
    </location>
</feature>
<feature type="region of interest" description="Disordered" evidence="2">
    <location>
        <begin position="256"/>
        <end position="299"/>
    </location>
</feature>
<feature type="region of interest" description="Interaction with SUZ12" evidence="1">
    <location>
        <begin position="301"/>
        <end position="349"/>
    </location>
</feature>
<feature type="compositionally biased region" description="Pro residues" evidence="2">
    <location>
        <begin position="1"/>
        <end position="10"/>
    </location>
</feature>
<feature type="compositionally biased region" description="Pro residues" evidence="2">
    <location>
        <begin position="171"/>
        <end position="194"/>
    </location>
</feature>
<feature type="compositionally biased region" description="Low complexity" evidence="2">
    <location>
        <begin position="207"/>
        <end position="225"/>
    </location>
</feature>
<feature type="compositionally biased region" description="Basic and acidic residues" evidence="2">
    <location>
        <begin position="228"/>
        <end position="237"/>
    </location>
</feature>
<feature type="compositionally biased region" description="Pro residues" evidence="2">
    <location>
        <begin position="282"/>
        <end position="296"/>
    </location>
</feature>
<feature type="modified residue" description="Phosphoserine" evidence="1">
    <location>
        <position position="15"/>
    </location>
</feature>
<feature type="modified residue" description="Phosphoserine" evidence="1">
    <location>
        <position position="19"/>
    </location>
</feature>
<feature type="modified residue" description="Asymmetric dimethylarginine" evidence="1">
    <location>
        <position position="52"/>
    </location>
</feature>
<feature type="mutagenesis site" description="Abolishes interaction with the elongin BC complex." evidence="6 7">
    <original>L</original>
    <variation>A</variation>
    <location>
        <position position="40"/>
    </location>
</feature>
<feature type="sequence conflict" description="In Ref. 1; BAC39864." evidence="12" ref="1">
    <original>F</original>
    <variation>S</variation>
    <location>
        <position position="129"/>
    </location>
</feature>
<feature type="sequence conflict" description="In Ref. 3; AAH06054." evidence="12" ref="3">
    <original>A</original>
    <variation>S</variation>
    <location>
        <position position="135"/>
    </location>
</feature>
<feature type="sequence conflict" description="In Ref. 1; BAC39864." evidence="12" ref="1">
    <original>P</original>
    <variation>A</variation>
    <location>
        <position position="286"/>
    </location>
</feature>
<keyword id="KW-0156">Chromatin regulator</keyword>
<keyword id="KW-0158">Chromosome</keyword>
<keyword id="KW-0488">Methylation</keyword>
<keyword id="KW-0539">Nucleus</keyword>
<keyword id="KW-0597">Phosphoprotein</keyword>
<keyword id="KW-1185">Reference proteome</keyword>
<name>EPOP_MOUSE</name>
<gene>
    <name evidence="10 11 13" type="primary">Epop</name>
    <name evidence="9" type="synonym">E13</name>
</gene>
<dbReference type="EMBL" id="AK087411">
    <property type="protein sequence ID" value="BAC39864.1"/>
    <property type="molecule type" value="mRNA"/>
</dbReference>
<dbReference type="EMBL" id="AL596123">
    <property type="status" value="NOT_ANNOTATED_CDS"/>
    <property type="molecule type" value="Genomic_DNA"/>
</dbReference>
<dbReference type="EMBL" id="BC006054">
    <property type="protein sequence ID" value="AAH06054.1"/>
    <property type="status" value="ALT_INIT"/>
    <property type="molecule type" value="mRNA"/>
</dbReference>
<dbReference type="EMBL" id="BC055770">
    <property type="protein sequence ID" value="AAH55770.1"/>
    <property type="molecule type" value="mRNA"/>
</dbReference>
<dbReference type="CCDS" id="CCDS25322.1"/>
<dbReference type="RefSeq" id="NP_780541.2">
    <property type="nucleotide sequence ID" value="NM_175332.3"/>
</dbReference>
<dbReference type="SMR" id="Q7TNS8"/>
<dbReference type="BioGRID" id="222112">
    <property type="interactions" value="29"/>
</dbReference>
<dbReference type="DIP" id="DIP-59969N"/>
<dbReference type="FunCoup" id="Q7TNS8">
    <property type="interactions" value="56"/>
</dbReference>
<dbReference type="IntAct" id="Q7TNS8">
    <property type="interactions" value="27"/>
</dbReference>
<dbReference type="STRING" id="10090.ENSMUSP00000051211"/>
<dbReference type="GlyGen" id="Q7TNS8">
    <property type="glycosylation" value="1 site"/>
</dbReference>
<dbReference type="PhosphoSitePlus" id="Q7TNS8"/>
<dbReference type="PaxDb" id="10090-ENSMUSP00000051211"/>
<dbReference type="PeptideAtlas" id="Q7TNS8"/>
<dbReference type="ProteomicsDB" id="275670"/>
<dbReference type="Antibodypedia" id="74279">
    <property type="antibodies" value="21 antibodies from 6 providers"/>
</dbReference>
<dbReference type="DNASU" id="103551"/>
<dbReference type="Ensembl" id="ENSMUST00000052281.6">
    <property type="protein sequence ID" value="ENSMUSP00000051211.5"/>
    <property type="gene ID" value="ENSMUSG00000043439.6"/>
</dbReference>
<dbReference type="GeneID" id="103551"/>
<dbReference type="KEGG" id="mmu:103551"/>
<dbReference type="UCSC" id="uc007leg.1">
    <property type="organism name" value="mouse"/>
</dbReference>
<dbReference type="AGR" id="MGI:2143991"/>
<dbReference type="CTD" id="100170841"/>
<dbReference type="MGI" id="MGI:2143991">
    <property type="gene designation" value="Epop"/>
</dbReference>
<dbReference type="VEuPathDB" id="HostDB:ENSMUSG00000043439"/>
<dbReference type="eggNOG" id="ENOG502QSWJ">
    <property type="taxonomic scope" value="Eukaryota"/>
</dbReference>
<dbReference type="GeneTree" id="ENSGT00940000153451"/>
<dbReference type="HOGENOM" id="CLU_062153_0_0_1"/>
<dbReference type="InParanoid" id="Q7TNS8"/>
<dbReference type="OMA" id="PLCTGGW"/>
<dbReference type="OrthoDB" id="10014624at2759"/>
<dbReference type="PhylomeDB" id="Q7TNS8"/>
<dbReference type="TreeFam" id="TF337589"/>
<dbReference type="BioGRID-ORCS" id="103551">
    <property type="hits" value="3 hits in 77 CRISPR screens"/>
</dbReference>
<dbReference type="PRO" id="PR:Q7TNS8"/>
<dbReference type="Proteomes" id="UP000000589">
    <property type="component" value="Chromosome 11"/>
</dbReference>
<dbReference type="RNAct" id="Q7TNS8">
    <property type="molecule type" value="protein"/>
</dbReference>
<dbReference type="Bgee" id="ENSMUSG00000043439">
    <property type="expression patterns" value="Expressed in ectoplacental cone and 108 other cell types or tissues"/>
</dbReference>
<dbReference type="GO" id="GO:0005694">
    <property type="term" value="C:chromosome"/>
    <property type="evidence" value="ECO:0007669"/>
    <property type="project" value="UniProtKB-SubCell"/>
</dbReference>
<dbReference type="GO" id="GO:0005634">
    <property type="term" value="C:nucleus"/>
    <property type="evidence" value="ECO:0007669"/>
    <property type="project" value="UniProtKB-SubCell"/>
</dbReference>
<dbReference type="GO" id="GO:0003682">
    <property type="term" value="F:chromatin binding"/>
    <property type="evidence" value="ECO:0000314"/>
    <property type="project" value="UniProtKB"/>
</dbReference>
<dbReference type="GO" id="GO:0044877">
    <property type="term" value="F:protein-containing complex binding"/>
    <property type="evidence" value="ECO:0000314"/>
    <property type="project" value="UniProtKB"/>
</dbReference>
<dbReference type="GO" id="GO:0048663">
    <property type="term" value="P:neuron fate commitment"/>
    <property type="evidence" value="ECO:0000314"/>
    <property type="project" value="MGI"/>
</dbReference>
<dbReference type="GO" id="GO:0006357">
    <property type="term" value="P:regulation of transcription by RNA polymerase II"/>
    <property type="evidence" value="ECO:0000314"/>
    <property type="project" value="UniProtKB"/>
</dbReference>
<dbReference type="GO" id="GO:0048863">
    <property type="term" value="P:stem cell differentiation"/>
    <property type="evidence" value="ECO:0000315"/>
    <property type="project" value="UniProtKB"/>
</dbReference>
<dbReference type="GO" id="GO:0140673">
    <property type="term" value="P:transcription elongation-coupled chromatin remodeling"/>
    <property type="evidence" value="ECO:0000315"/>
    <property type="project" value="UniProtKB"/>
</dbReference>
<dbReference type="InterPro" id="IPR052119">
    <property type="entry name" value="ElonginBC-PRC2_ViralRestrict"/>
</dbReference>
<dbReference type="InterPro" id="IPR027971">
    <property type="entry name" value="EPOP"/>
</dbReference>
<dbReference type="PANTHER" id="PTHR23187:SF1">
    <property type="entry name" value="ELONGIN BC AND POLYCOMB REPRESSIVE COMPLEX 2-ASSOCIATED PROTEIN"/>
    <property type="match status" value="1"/>
</dbReference>
<dbReference type="PANTHER" id="PTHR23187">
    <property type="entry name" value="FLJ44216 PROTEIN-RELATED"/>
    <property type="match status" value="1"/>
</dbReference>
<dbReference type="Pfam" id="PF15223">
    <property type="entry name" value="EPOP"/>
    <property type="match status" value="1"/>
</dbReference>
<accession>Q7TNS8</accession>
<accession>Q8BN79</accession>
<accession>Q99JK6</accession>
<organism>
    <name type="scientific">Mus musculus</name>
    <name type="common">Mouse</name>
    <dbReference type="NCBI Taxonomy" id="10090"/>
    <lineage>
        <taxon>Eukaryota</taxon>
        <taxon>Metazoa</taxon>
        <taxon>Chordata</taxon>
        <taxon>Craniata</taxon>
        <taxon>Vertebrata</taxon>
        <taxon>Euteleostomi</taxon>
        <taxon>Mammalia</taxon>
        <taxon>Eutheria</taxon>
        <taxon>Euarchontoglires</taxon>
        <taxon>Glires</taxon>
        <taxon>Rodentia</taxon>
        <taxon>Myomorpha</taxon>
        <taxon>Muroidea</taxon>
        <taxon>Muridae</taxon>
        <taxon>Murinae</taxon>
        <taxon>Mus</taxon>
        <taxon>Mus</taxon>
    </lineage>
</organism>
<protein>
    <recommendedName>
        <fullName evidence="10 11">Elongin BC and Polycomb repressive complex 2-associated protein</fullName>
    </recommendedName>
    <alternativeName>
        <fullName evidence="8">Embryonic stem cell-specific PRC2 subunit p48</fullName>
        <shortName evidence="8">ES cell-specific PRC2 subunit p48</shortName>
        <shortName evidence="8">esPRC2p48</shortName>
    </alternativeName>
</protein>